<dbReference type="EC" id="2.3.1.181" evidence="1"/>
<dbReference type="EMBL" id="CP000141">
    <property type="protein sequence ID" value="ABB13955.1"/>
    <property type="molecule type" value="Genomic_DNA"/>
</dbReference>
<dbReference type="RefSeq" id="WP_011343429.1">
    <property type="nucleotide sequence ID" value="NC_007503.1"/>
</dbReference>
<dbReference type="SMR" id="Q3AET1"/>
<dbReference type="FunCoup" id="Q3AET1">
    <property type="interactions" value="82"/>
</dbReference>
<dbReference type="STRING" id="246194.CHY_0495"/>
<dbReference type="KEGG" id="chy:CHY_0495"/>
<dbReference type="eggNOG" id="COG0095">
    <property type="taxonomic scope" value="Bacteria"/>
</dbReference>
<dbReference type="HOGENOM" id="CLU_022986_5_0_9"/>
<dbReference type="InParanoid" id="Q3AET1"/>
<dbReference type="OrthoDB" id="9788148at2"/>
<dbReference type="Proteomes" id="UP000002706">
    <property type="component" value="Chromosome"/>
</dbReference>
<dbReference type="GO" id="GO:0033819">
    <property type="term" value="F:lipoyl(octanoyl) transferase activity"/>
    <property type="evidence" value="ECO:0007669"/>
    <property type="project" value="UniProtKB-UniRule"/>
</dbReference>
<dbReference type="GO" id="GO:0009107">
    <property type="term" value="P:lipoate biosynthetic process"/>
    <property type="evidence" value="ECO:0007669"/>
    <property type="project" value="UniProtKB-UniRule"/>
</dbReference>
<dbReference type="GO" id="GO:0036211">
    <property type="term" value="P:protein modification process"/>
    <property type="evidence" value="ECO:0007669"/>
    <property type="project" value="InterPro"/>
</dbReference>
<dbReference type="CDD" id="cd16443">
    <property type="entry name" value="LplA"/>
    <property type="match status" value="1"/>
</dbReference>
<dbReference type="Gene3D" id="3.30.930.10">
    <property type="entry name" value="Bira Bifunctional Protein, Domain 2"/>
    <property type="match status" value="1"/>
</dbReference>
<dbReference type="HAMAP" id="MF_02118">
    <property type="entry name" value="LipM"/>
    <property type="match status" value="1"/>
</dbReference>
<dbReference type="InterPro" id="IPR045864">
    <property type="entry name" value="aa-tRNA-synth_II/BPL/LPL"/>
</dbReference>
<dbReference type="InterPro" id="IPR004143">
    <property type="entry name" value="BPL_LPL_catalytic"/>
</dbReference>
<dbReference type="InterPro" id="IPR024898">
    <property type="entry name" value="LipM"/>
</dbReference>
<dbReference type="InterPro" id="IPR050664">
    <property type="entry name" value="Octanoyltrans_LipM/LipL"/>
</dbReference>
<dbReference type="PANTHER" id="PTHR43679:SF2">
    <property type="entry name" value="OCTANOYL-[GCVH]:PROTEIN N-OCTANOYLTRANSFERASE"/>
    <property type="match status" value="1"/>
</dbReference>
<dbReference type="PANTHER" id="PTHR43679">
    <property type="entry name" value="OCTANOYLTRANSFERASE LIPM-RELATED"/>
    <property type="match status" value="1"/>
</dbReference>
<dbReference type="Pfam" id="PF21948">
    <property type="entry name" value="LplA-B_cat"/>
    <property type="match status" value="1"/>
</dbReference>
<dbReference type="SUPFAM" id="SSF55681">
    <property type="entry name" value="Class II aaRS and biotin synthetases"/>
    <property type="match status" value="1"/>
</dbReference>
<dbReference type="PROSITE" id="PS51733">
    <property type="entry name" value="BPL_LPL_CATALYTIC"/>
    <property type="match status" value="1"/>
</dbReference>
<sequence>METWRFIDHCSFSGAENMAIDEALLQEAINNHGAPVLRFYTWTRPTLSLGYFQKAQEEVDFSECEKLGVEVVRRPTGGRAVLHEFELTYSIVGSIQHPKLSGTVLESYLKISKGLLLGLKNLGIEGEIAEGKKTSDLSAICFEAPSWYELTVMGRKVIGSAQVRRGDYLLQHGAIVIKMDVDKLFRVLKFKSLEQKERIRASFHRKAGAIHDFSSREFSLAEIKEAFLAGFSEGFEVNFIRSELSLKERELSRQLLREKYNTREWLFRF</sequence>
<gene>
    <name evidence="1" type="primary">lipM</name>
    <name type="ordered locus">CHY_0495</name>
</gene>
<feature type="chain" id="PRO_0000410854" description="Octanoyltransferase LipM">
    <location>
        <begin position="1"/>
        <end position="269"/>
    </location>
</feature>
<feature type="domain" description="BPL/LPL catalytic" evidence="2">
    <location>
        <begin position="31"/>
        <end position="239"/>
    </location>
</feature>
<feature type="active site" description="Acyl-thioester intermediate" evidence="1">
    <location>
        <position position="141"/>
    </location>
</feature>
<feature type="site" description="Lowers pKa of active site Cys" evidence="1">
    <location>
        <position position="156"/>
    </location>
</feature>
<accession>Q3AET1</accession>
<proteinExistence type="inferred from homology"/>
<evidence type="ECO:0000255" key="1">
    <source>
        <dbReference type="HAMAP-Rule" id="MF_02118"/>
    </source>
</evidence>
<evidence type="ECO:0000255" key="2">
    <source>
        <dbReference type="PROSITE-ProRule" id="PRU01067"/>
    </source>
</evidence>
<keyword id="KW-0012">Acyltransferase</keyword>
<keyword id="KW-1185">Reference proteome</keyword>
<keyword id="KW-0808">Transferase</keyword>
<name>LIPM_CARHZ</name>
<reference key="1">
    <citation type="journal article" date="2005" name="PLoS Genet.">
        <title>Life in hot carbon monoxide: the complete genome sequence of Carboxydothermus hydrogenoformans Z-2901.</title>
        <authorList>
            <person name="Wu M."/>
            <person name="Ren Q."/>
            <person name="Durkin A.S."/>
            <person name="Daugherty S.C."/>
            <person name="Brinkac L.M."/>
            <person name="Dodson R.J."/>
            <person name="Madupu R."/>
            <person name="Sullivan S.A."/>
            <person name="Kolonay J.F."/>
            <person name="Nelson W.C."/>
            <person name="Tallon L.J."/>
            <person name="Jones K.M."/>
            <person name="Ulrich L.E."/>
            <person name="Gonzalez J.M."/>
            <person name="Zhulin I.B."/>
            <person name="Robb F.T."/>
            <person name="Eisen J.A."/>
        </authorList>
    </citation>
    <scope>NUCLEOTIDE SEQUENCE [LARGE SCALE GENOMIC DNA]</scope>
    <source>
        <strain>ATCC BAA-161 / DSM 6008 / Z-2901</strain>
    </source>
</reference>
<comment type="function">
    <text evidence="1">Catalyzes the transfer of endogenously produced octanoic acid from octanoyl-acyl-carrier-protein onto the lipoyl domain of GcvH, an intermediate carrier during protein lipoylation.</text>
</comment>
<comment type="catalytic activity">
    <reaction evidence="1">
        <text>octanoyl-[ACP] + L-lysyl-[protein] = N(6)-octanoyl-L-lysyl-[protein] + holo-[ACP] + H(+)</text>
        <dbReference type="Rhea" id="RHEA:17665"/>
        <dbReference type="Rhea" id="RHEA-COMP:9636"/>
        <dbReference type="Rhea" id="RHEA-COMP:9685"/>
        <dbReference type="Rhea" id="RHEA-COMP:9752"/>
        <dbReference type="Rhea" id="RHEA-COMP:9928"/>
        <dbReference type="ChEBI" id="CHEBI:15378"/>
        <dbReference type="ChEBI" id="CHEBI:29969"/>
        <dbReference type="ChEBI" id="CHEBI:64479"/>
        <dbReference type="ChEBI" id="CHEBI:78463"/>
        <dbReference type="ChEBI" id="CHEBI:78809"/>
        <dbReference type="EC" id="2.3.1.181"/>
    </reaction>
</comment>
<comment type="pathway">
    <text evidence="1">Protein modification; protein lipoylation via endogenous pathway; protein N(6)-(lipoyl)lysine from octanoyl-[acyl-carrier-protein].</text>
</comment>
<comment type="subunit">
    <text evidence="1">Monomer.</text>
</comment>
<comment type="miscellaneous">
    <text evidence="1">In the reaction, the free carboxyl group of octanoic acid is attached via an amide linkage to the epsilon-amino group of a specific lysine residue of lipoyl domains of lipoate-dependent enzymes. The reaction proceeds via an octanoyl-thioester enzyme intermediate.</text>
</comment>
<comment type="similarity">
    <text evidence="1">Belongs to the octanoyltransferase LipM family.</text>
</comment>
<protein>
    <recommendedName>
        <fullName evidence="1">Octanoyltransferase LipM</fullName>
        <ecNumber evidence="1">2.3.1.181</ecNumber>
    </recommendedName>
    <alternativeName>
        <fullName evidence="1">Octanoyl-[acyl-carrier-protein]:[GcvH] N-octanoyltransferase</fullName>
    </alternativeName>
</protein>
<organism>
    <name type="scientific">Carboxydothermus hydrogenoformans (strain ATCC BAA-161 / DSM 6008 / Z-2901)</name>
    <dbReference type="NCBI Taxonomy" id="246194"/>
    <lineage>
        <taxon>Bacteria</taxon>
        <taxon>Bacillati</taxon>
        <taxon>Bacillota</taxon>
        <taxon>Clostridia</taxon>
        <taxon>Thermoanaerobacterales</taxon>
        <taxon>Thermoanaerobacteraceae</taxon>
        <taxon>Carboxydothermus</taxon>
    </lineage>
</organism>